<organism>
    <name type="scientific">Xanthomonas oryzae pv. oryzae (strain PXO99A)</name>
    <dbReference type="NCBI Taxonomy" id="360094"/>
    <lineage>
        <taxon>Bacteria</taxon>
        <taxon>Pseudomonadati</taxon>
        <taxon>Pseudomonadota</taxon>
        <taxon>Gammaproteobacteria</taxon>
        <taxon>Lysobacterales</taxon>
        <taxon>Lysobacteraceae</taxon>
        <taxon>Xanthomonas</taxon>
    </lineage>
</organism>
<reference key="1">
    <citation type="journal article" date="2008" name="BMC Genomics">
        <title>Genome sequence and rapid evolution of the rice pathogen Xanthomonas oryzae pv. oryzae PXO99A.</title>
        <authorList>
            <person name="Salzberg S.L."/>
            <person name="Sommer D.D."/>
            <person name="Schatz M.C."/>
            <person name="Phillippy A.M."/>
            <person name="Rabinowicz P.D."/>
            <person name="Tsuge S."/>
            <person name="Furutani A."/>
            <person name="Ochiai H."/>
            <person name="Delcher A.L."/>
            <person name="Kelley D."/>
            <person name="Madupu R."/>
            <person name="Puiu D."/>
            <person name="Radune D."/>
            <person name="Shumway M."/>
            <person name="Trapnell C."/>
            <person name="Aparna G."/>
            <person name="Jha G."/>
            <person name="Pandey A."/>
            <person name="Patil P.B."/>
            <person name="Ishihara H."/>
            <person name="Meyer D.F."/>
            <person name="Szurek B."/>
            <person name="Verdier V."/>
            <person name="Koebnik R."/>
            <person name="Dow J.M."/>
            <person name="Ryan R.P."/>
            <person name="Hirata H."/>
            <person name="Tsuyumu S."/>
            <person name="Won Lee S."/>
            <person name="Seo Y.-S."/>
            <person name="Sriariyanum M."/>
            <person name="Ronald P.C."/>
            <person name="Sonti R.V."/>
            <person name="Van Sluys M.-A."/>
            <person name="Leach J.E."/>
            <person name="White F.F."/>
            <person name="Bogdanove A.J."/>
        </authorList>
    </citation>
    <scope>NUCLEOTIDE SEQUENCE [LARGE SCALE GENOMIC DNA]</scope>
    <source>
        <strain>PXO99A</strain>
    </source>
</reference>
<protein>
    <recommendedName>
        <fullName evidence="1">UPF0250 protein PXO_04287</fullName>
    </recommendedName>
</protein>
<accession>B2SN02</accession>
<comment type="similarity">
    <text evidence="1">Belongs to the UPF0250 family.</text>
</comment>
<sequence length="92" mass="10215">MDISTDNPDHGFQFPGTFELSAMGAAERGLETELPRLLAATGVELLQESVSWKHSSSGKYVSVKIGFRAESREQFDAAHQALRDHPEVKWTL</sequence>
<proteinExistence type="inferred from homology"/>
<evidence type="ECO:0000255" key="1">
    <source>
        <dbReference type="HAMAP-Rule" id="MF_00659"/>
    </source>
</evidence>
<name>Y4287_XANOP</name>
<gene>
    <name type="ordered locus">PXO_04287</name>
</gene>
<dbReference type="EMBL" id="CP000967">
    <property type="protein sequence ID" value="ACD57564.1"/>
    <property type="molecule type" value="Genomic_DNA"/>
</dbReference>
<dbReference type="RefSeq" id="WP_011409453.1">
    <property type="nucleotide sequence ID" value="NC_010717.2"/>
</dbReference>
<dbReference type="SMR" id="B2SN02"/>
<dbReference type="KEGG" id="xop:PXO_04287"/>
<dbReference type="eggNOG" id="COG2921">
    <property type="taxonomic scope" value="Bacteria"/>
</dbReference>
<dbReference type="HOGENOM" id="CLU_161438_1_1_6"/>
<dbReference type="Proteomes" id="UP000001740">
    <property type="component" value="Chromosome"/>
</dbReference>
<dbReference type="Gene3D" id="3.30.70.260">
    <property type="match status" value="1"/>
</dbReference>
<dbReference type="HAMAP" id="MF_00659">
    <property type="entry name" value="UPF0250"/>
    <property type="match status" value="1"/>
</dbReference>
<dbReference type="InterPro" id="IPR007454">
    <property type="entry name" value="UPF0250_YbeD-like"/>
</dbReference>
<dbReference type="InterPro" id="IPR027471">
    <property type="entry name" value="YbeD-like_sf"/>
</dbReference>
<dbReference type="NCBIfam" id="NF002066">
    <property type="entry name" value="PRK00907.1"/>
    <property type="match status" value="1"/>
</dbReference>
<dbReference type="Pfam" id="PF04359">
    <property type="entry name" value="DUF493"/>
    <property type="match status" value="1"/>
</dbReference>
<dbReference type="SUPFAM" id="SSF117991">
    <property type="entry name" value="YbeD/HP0495-like"/>
    <property type="match status" value="1"/>
</dbReference>
<feature type="chain" id="PRO_1000131265" description="UPF0250 protein PXO_04287">
    <location>
        <begin position="1"/>
        <end position="92"/>
    </location>
</feature>